<proteinExistence type="inferred from homology"/>
<feature type="chain" id="PRO_0000176509" description="Transcription antitermination protein NusB">
    <location>
        <begin position="1"/>
        <end position="190"/>
    </location>
</feature>
<feature type="region of interest" description="Disordered" evidence="2">
    <location>
        <begin position="135"/>
        <end position="190"/>
    </location>
</feature>
<feature type="compositionally biased region" description="Acidic residues" evidence="2">
    <location>
        <begin position="141"/>
        <end position="150"/>
    </location>
</feature>
<name>NUSB_BIFLO</name>
<protein>
    <recommendedName>
        <fullName evidence="1">Transcription antitermination protein NusB</fullName>
    </recommendedName>
    <alternativeName>
        <fullName evidence="1">Antitermination factor NusB</fullName>
    </alternativeName>
</protein>
<comment type="function">
    <text evidence="1">Involved in transcription antitermination. Required for transcription of ribosomal RNA (rRNA) genes. Binds specifically to the boxA antiterminator sequence of the ribosomal RNA (rrn) operons.</text>
</comment>
<comment type="similarity">
    <text evidence="1">Belongs to the NusB family.</text>
</comment>
<evidence type="ECO:0000255" key="1">
    <source>
        <dbReference type="HAMAP-Rule" id="MF_00073"/>
    </source>
</evidence>
<evidence type="ECO:0000256" key="2">
    <source>
        <dbReference type="SAM" id="MobiDB-lite"/>
    </source>
</evidence>
<accession>Q8G817</accession>
<reference key="1">
    <citation type="journal article" date="2002" name="Proc. Natl. Acad. Sci. U.S.A.">
        <title>The genome sequence of Bifidobacterium longum reflects its adaptation to the human gastrointestinal tract.</title>
        <authorList>
            <person name="Schell M.A."/>
            <person name="Karmirantzou M."/>
            <person name="Snel B."/>
            <person name="Vilanova D."/>
            <person name="Berger B."/>
            <person name="Pessi G."/>
            <person name="Zwahlen M.-C."/>
            <person name="Desiere F."/>
            <person name="Bork P."/>
            <person name="Delley M."/>
            <person name="Pridmore R.D."/>
            <person name="Arigoni F."/>
        </authorList>
    </citation>
    <scope>NUCLEOTIDE SEQUENCE [LARGE SCALE GENOMIC DNA]</scope>
    <source>
        <strain>NCC 2705</strain>
    </source>
</reference>
<gene>
    <name evidence="1" type="primary">nusB</name>
    <name type="ordered locus">BL0066</name>
</gene>
<sequence length="190" mass="20308">MARSTARKRALNTLYEADEKSQDILSLLDERIAHPGAQTPLPDYAIEIVKGVAEHRRQIDMTLDEHSTGWKVRRMGVVDRNILRIAAWEILFTDDVPDKVAIDEALALAKTLCDDDSPAFIHGLLSAVCTAKNAAPAPESVAEEADEESSDSAAAASEPTDEGDVSDSPDSSGASDEPAAPSAEIQPTVD</sequence>
<keyword id="KW-1185">Reference proteome</keyword>
<keyword id="KW-0694">RNA-binding</keyword>
<keyword id="KW-0804">Transcription</keyword>
<keyword id="KW-0889">Transcription antitermination</keyword>
<keyword id="KW-0805">Transcription regulation</keyword>
<organism>
    <name type="scientific">Bifidobacterium longum (strain NCC 2705)</name>
    <dbReference type="NCBI Taxonomy" id="206672"/>
    <lineage>
        <taxon>Bacteria</taxon>
        <taxon>Bacillati</taxon>
        <taxon>Actinomycetota</taxon>
        <taxon>Actinomycetes</taxon>
        <taxon>Bifidobacteriales</taxon>
        <taxon>Bifidobacteriaceae</taxon>
        <taxon>Bifidobacterium</taxon>
    </lineage>
</organism>
<dbReference type="EMBL" id="AE014295">
    <property type="protein sequence ID" value="AAN23932.1"/>
    <property type="molecule type" value="Genomic_DNA"/>
</dbReference>
<dbReference type="RefSeq" id="NP_695296.1">
    <property type="nucleotide sequence ID" value="NC_004307.2"/>
</dbReference>
<dbReference type="RefSeq" id="WP_007053263.1">
    <property type="nucleotide sequence ID" value="NC_004307.2"/>
</dbReference>
<dbReference type="SMR" id="Q8G817"/>
<dbReference type="STRING" id="206672.BL0066"/>
<dbReference type="EnsemblBacteria" id="AAN23932">
    <property type="protein sequence ID" value="AAN23932"/>
    <property type="gene ID" value="BL0066"/>
</dbReference>
<dbReference type="GeneID" id="69578601"/>
<dbReference type="KEGG" id="blo:BL0066"/>
<dbReference type="PATRIC" id="fig|206672.9.peg.72"/>
<dbReference type="HOGENOM" id="CLU_087843_2_1_11"/>
<dbReference type="OrthoDB" id="3528057at2"/>
<dbReference type="PhylomeDB" id="Q8G817"/>
<dbReference type="Proteomes" id="UP000000439">
    <property type="component" value="Chromosome"/>
</dbReference>
<dbReference type="GO" id="GO:0005829">
    <property type="term" value="C:cytosol"/>
    <property type="evidence" value="ECO:0007669"/>
    <property type="project" value="TreeGrafter"/>
</dbReference>
<dbReference type="GO" id="GO:0003723">
    <property type="term" value="F:RNA binding"/>
    <property type="evidence" value="ECO:0007669"/>
    <property type="project" value="UniProtKB-UniRule"/>
</dbReference>
<dbReference type="GO" id="GO:0006353">
    <property type="term" value="P:DNA-templated transcription termination"/>
    <property type="evidence" value="ECO:0007669"/>
    <property type="project" value="UniProtKB-UniRule"/>
</dbReference>
<dbReference type="GO" id="GO:0031564">
    <property type="term" value="P:transcription antitermination"/>
    <property type="evidence" value="ECO:0007669"/>
    <property type="project" value="UniProtKB-KW"/>
</dbReference>
<dbReference type="Gene3D" id="1.10.940.10">
    <property type="entry name" value="NusB-like"/>
    <property type="match status" value="1"/>
</dbReference>
<dbReference type="HAMAP" id="MF_00073">
    <property type="entry name" value="NusB"/>
    <property type="match status" value="1"/>
</dbReference>
<dbReference type="InterPro" id="IPR035926">
    <property type="entry name" value="NusB-like_sf"/>
</dbReference>
<dbReference type="InterPro" id="IPR011605">
    <property type="entry name" value="NusB_fam"/>
</dbReference>
<dbReference type="InterPro" id="IPR006027">
    <property type="entry name" value="NusB_RsmB_TIM44"/>
</dbReference>
<dbReference type="NCBIfam" id="TIGR01951">
    <property type="entry name" value="nusB"/>
    <property type="match status" value="1"/>
</dbReference>
<dbReference type="PANTHER" id="PTHR11078:SF3">
    <property type="entry name" value="ANTITERMINATION NUSB DOMAIN-CONTAINING PROTEIN"/>
    <property type="match status" value="1"/>
</dbReference>
<dbReference type="PANTHER" id="PTHR11078">
    <property type="entry name" value="N UTILIZATION SUBSTANCE PROTEIN B-RELATED"/>
    <property type="match status" value="1"/>
</dbReference>
<dbReference type="Pfam" id="PF01029">
    <property type="entry name" value="NusB"/>
    <property type="match status" value="1"/>
</dbReference>
<dbReference type="SUPFAM" id="SSF48013">
    <property type="entry name" value="NusB-like"/>
    <property type="match status" value="1"/>
</dbReference>